<dbReference type="EMBL" id="U22383">
    <property type="protein sequence ID" value="AAB64728.1"/>
    <property type="molecule type" value="Genomic_DNA"/>
</dbReference>
<dbReference type="EMBL" id="AY693300">
    <property type="protein sequence ID" value="AAT93319.1"/>
    <property type="molecule type" value="Genomic_DNA"/>
</dbReference>
<dbReference type="PIR" id="S70309">
    <property type="entry name" value="S70309"/>
</dbReference>
<dbReference type="DIP" id="DIP-1948N"/>
<dbReference type="IntAct" id="O13558">
    <property type="interactions" value="1"/>
</dbReference>
<dbReference type="MINT" id="O13558"/>
<dbReference type="STRING" id="4932.YLR465C"/>
<dbReference type="PaxDb" id="4932-YLR465C"/>
<dbReference type="EnsemblFungi" id="YLR465C_mRNA">
    <property type="protein sequence ID" value="YLR465C"/>
    <property type="gene ID" value="YLR465C"/>
</dbReference>
<dbReference type="AGR" id="SGD:S000004457"/>
<dbReference type="SGD" id="S000004457">
    <property type="gene designation" value="BSC3"/>
</dbReference>
<dbReference type="HOGENOM" id="CLU_2279675_0_0_1"/>
<reference key="1">
    <citation type="journal article" date="1997" name="Nature">
        <title>The nucleotide sequence of Saccharomyces cerevisiae chromosome XII.</title>
        <authorList>
            <person name="Johnston M."/>
            <person name="Hillier L.W."/>
            <person name="Riles L."/>
            <person name="Albermann K."/>
            <person name="Andre B."/>
            <person name="Ansorge W."/>
            <person name="Benes V."/>
            <person name="Brueckner M."/>
            <person name="Delius H."/>
            <person name="Dubois E."/>
            <person name="Duesterhoeft A."/>
            <person name="Entian K.-D."/>
            <person name="Floeth M."/>
            <person name="Goffeau A."/>
            <person name="Hebling U."/>
            <person name="Heumann K."/>
            <person name="Heuss-Neitzel D."/>
            <person name="Hilbert H."/>
            <person name="Hilger F."/>
            <person name="Kleine K."/>
            <person name="Koetter P."/>
            <person name="Louis E.J."/>
            <person name="Messenguy F."/>
            <person name="Mewes H.-W."/>
            <person name="Miosga T."/>
            <person name="Moestl D."/>
            <person name="Mueller-Auer S."/>
            <person name="Nentwich U."/>
            <person name="Obermaier B."/>
            <person name="Piravandi E."/>
            <person name="Pohl T.M."/>
            <person name="Portetelle D."/>
            <person name="Purnelle B."/>
            <person name="Rechmann S."/>
            <person name="Rieger M."/>
            <person name="Rinke M."/>
            <person name="Rose M."/>
            <person name="Scharfe M."/>
            <person name="Scherens B."/>
            <person name="Scholler P."/>
            <person name="Schwager C."/>
            <person name="Schwarz S."/>
            <person name="Underwood A.P."/>
            <person name="Urrestarazu L.A."/>
            <person name="Vandenbol M."/>
            <person name="Verhasselt P."/>
            <person name="Vierendeels F."/>
            <person name="Voet M."/>
            <person name="Volckaert G."/>
            <person name="Voss H."/>
            <person name="Wambutt R."/>
            <person name="Wedler E."/>
            <person name="Wedler H."/>
            <person name="Zimmermann F.K."/>
            <person name="Zollner A."/>
            <person name="Hani J."/>
            <person name="Hoheisel J.D."/>
        </authorList>
    </citation>
    <scope>NUCLEOTIDE SEQUENCE [LARGE SCALE GENOMIC DNA]</scope>
    <source>
        <strain>ATCC 204508 / S288c</strain>
    </source>
</reference>
<reference key="2">
    <citation type="journal article" date="2014" name="G3 (Bethesda)">
        <title>The reference genome sequence of Saccharomyces cerevisiae: Then and now.</title>
        <authorList>
            <person name="Engel S.R."/>
            <person name="Dietrich F.S."/>
            <person name="Fisk D.G."/>
            <person name="Binkley G."/>
            <person name="Balakrishnan R."/>
            <person name="Costanzo M.C."/>
            <person name="Dwight S.S."/>
            <person name="Hitz B.C."/>
            <person name="Karra K."/>
            <person name="Nash R.S."/>
            <person name="Weng S."/>
            <person name="Wong E.D."/>
            <person name="Lloyd P."/>
            <person name="Skrzypek M.S."/>
            <person name="Miyasato S.R."/>
            <person name="Simison M."/>
            <person name="Cherry J.M."/>
        </authorList>
    </citation>
    <scope>GENOME REANNOTATION</scope>
    <source>
        <strain>ATCC 204508 / S288c</strain>
    </source>
</reference>
<reference key="3">
    <citation type="journal article" date="2007" name="Genome Res.">
        <title>Approaching a complete repository of sequence-verified protein-encoding clones for Saccharomyces cerevisiae.</title>
        <authorList>
            <person name="Hu Y."/>
            <person name="Rolfs A."/>
            <person name="Bhullar B."/>
            <person name="Murthy T.V.S."/>
            <person name="Zhu C."/>
            <person name="Berger M.F."/>
            <person name="Camargo A.A."/>
            <person name="Kelley F."/>
            <person name="McCarron S."/>
            <person name="Jepson D."/>
            <person name="Richardson A."/>
            <person name="Raphael J."/>
            <person name="Moreira D."/>
            <person name="Taycher E."/>
            <person name="Zuo D."/>
            <person name="Mohr S."/>
            <person name="Kane M.F."/>
            <person name="Williamson J."/>
            <person name="Simpson A.J.G."/>
            <person name="Bulyk M.L."/>
            <person name="Harlow E."/>
            <person name="Marsischky G."/>
            <person name="Kolodner R.D."/>
            <person name="LaBaer J."/>
        </authorList>
    </citation>
    <scope>NUCLEOTIDE SEQUENCE [GENOMIC DNA]</scope>
    <source>
        <strain>ATCC 204508 / S288c</strain>
    </source>
</reference>
<proteinExistence type="uncertain"/>
<accession>O13558</accession>
<gene>
    <name type="primary">BSC3</name>
    <name type="ordered locus">YLR465C</name>
</gene>
<sequence>MDHPHKWHRKLVNCNSDFIFKSRGHFVSISSQLGQHNFTIFNRYHLKKRIVFQILVNSSLRFSEQNFSITQNEAGIWKQLFNSPQSFPHTDIPSEEGTKVIL</sequence>
<protein>
    <recommendedName>
        <fullName>Putative uncharacterized protein BSC3</fullName>
    </recommendedName>
</protein>
<comment type="miscellaneous">
    <text evidence="1">Overlaps YLR464W and YRF1-4.</text>
</comment>
<comment type="caution">
    <text evidence="2">Product of a dubious gene prediction unlikely to encode a functional protein. Because of that it is not part of the S.cerevisiae S288c complete/reference proteome set.</text>
</comment>
<name>BSC3_YEAST</name>
<evidence type="ECO:0000305" key="1"/>
<evidence type="ECO:0000305" key="2">
    <source>
    </source>
</evidence>
<feature type="chain" id="PRO_0000299769" description="Putative uncharacterized protein BSC3">
    <location>
        <begin position="1"/>
        <end position="102"/>
    </location>
</feature>
<organism>
    <name type="scientific">Saccharomyces cerevisiae (strain ATCC 204508 / S288c)</name>
    <name type="common">Baker's yeast</name>
    <dbReference type="NCBI Taxonomy" id="559292"/>
    <lineage>
        <taxon>Eukaryota</taxon>
        <taxon>Fungi</taxon>
        <taxon>Dikarya</taxon>
        <taxon>Ascomycota</taxon>
        <taxon>Saccharomycotina</taxon>
        <taxon>Saccharomycetes</taxon>
        <taxon>Saccharomycetales</taxon>
        <taxon>Saccharomycetaceae</taxon>
        <taxon>Saccharomyces</taxon>
    </lineage>
</organism>